<sequence>MANDFLFTSESVSEGHPDKVADQISDAILDAIFEQDPRSRVAAETLTNTGLVVLAGEITTNAHVDYIQVARDTIKRIGYDNTEYGIDYKGCAVLVAYDKQSNDIAQGVDHASDDHLNTGAGDQGLMFGYACDETPELMPAPIYYAHRLVERQAQLRKDGRLPFLRPDAKSQVTMRYVDGKPHSIDTIVLSTQHSPEQSLGDKMIPSFYEAIREELIKPVLPKEWITAETQYLINPTGRFVIGGPQGDCGLTGRKIIVDTYGGACPHGGGAFSGKDPTKVDRSAAYAARYVAKNIVAAGLARQCQIQVAYAIGVARPMNITVYTEGTGVIPDAEIAKLVEAHFDLRPKGIIQMLDLLRPIYQKTAAYGHFGREEPEFTWERTDKAQVLRAAAGL</sequence>
<organism>
    <name type="scientific">Leptothrix cholodnii (strain ATCC 51168 / LMG 8142 / SP-6)</name>
    <name type="common">Leptothrix discophora (strain SP-6)</name>
    <dbReference type="NCBI Taxonomy" id="395495"/>
    <lineage>
        <taxon>Bacteria</taxon>
        <taxon>Pseudomonadati</taxon>
        <taxon>Pseudomonadota</taxon>
        <taxon>Betaproteobacteria</taxon>
        <taxon>Burkholderiales</taxon>
        <taxon>Sphaerotilaceae</taxon>
        <taxon>Leptothrix</taxon>
    </lineage>
</organism>
<proteinExistence type="inferred from homology"/>
<protein>
    <recommendedName>
        <fullName evidence="1">S-adenosylmethionine synthase</fullName>
        <shortName evidence="1">AdoMet synthase</shortName>
        <ecNumber evidence="1">2.5.1.6</ecNumber>
    </recommendedName>
    <alternativeName>
        <fullName evidence="1">MAT</fullName>
    </alternativeName>
    <alternativeName>
        <fullName evidence="1">Methionine adenosyltransferase</fullName>
    </alternativeName>
</protein>
<dbReference type="EC" id="2.5.1.6" evidence="1"/>
<dbReference type="EMBL" id="CP001013">
    <property type="protein sequence ID" value="ACB32401.1"/>
    <property type="molecule type" value="Genomic_DNA"/>
</dbReference>
<dbReference type="RefSeq" id="WP_012345163.1">
    <property type="nucleotide sequence ID" value="NC_010524.1"/>
</dbReference>
<dbReference type="SMR" id="B1Y6S3"/>
<dbReference type="STRING" id="395495.Lcho_0126"/>
<dbReference type="KEGG" id="lch:Lcho_0126"/>
<dbReference type="eggNOG" id="COG0192">
    <property type="taxonomic scope" value="Bacteria"/>
</dbReference>
<dbReference type="HOGENOM" id="CLU_041802_1_1_4"/>
<dbReference type="OrthoDB" id="9801686at2"/>
<dbReference type="UniPathway" id="UPA00315">
    <property type="reaction ID" value="UER00080"/>
</dbReference>
<dbReference type="Proteomes" id="UP000001693">
    <property type="component" value="Chromosome"/>
</dbReference>
<dbReference type="GO" id="GO:0005737">
    <property type="term" value="C:cytoplasm"/>
    <property type="evidence" value="ECO:0007669"/>
    <property type="project" value="UniProtKB-SubCell"/>
</dbReference>
<dbReference type="GO" id="GO:0005524">
    <property type="term" value="F:ATP binding"/>
    <property type="evidence" value="ECO:0007669"/>
    <property type="project" value="UniProtKB-UniRule"/>
</dbReference>
<dbReference type="GO" id="GO:0000287">
    <property type="term" value="F:magnesium ion binding"/>
    <property type="evidence" value="ECO:0007669"/>
    <property type="project" value="UniProtKB-UniRule"/>
</dbReference>
<dbReference type="GO" id="GO:0004478">
    <property type="term" value="F:methionine adenosyltransferase activity"/>
    <property type="evidence" value="ECO:0007669"/>
    <property type="project" value="UniProtKB-UniRule"/>
</dbReference>
<dbReference type="GO" id="GO:0006730">
    <property type="term" value="P:one-carbon metabolic process"/>
    <property type="evidence" value="ECO:0007669"/>
    <property type="project" value="UniProtKB-KW"/>
</dbReference>
<dbReference type="GO" id="GO:0006556">
    <property type="term" value="P:S-adenosylmethionine biosynthetic process"/>
    <property type="evidence" value="ECO:0007669"/>
    <property type="project" value="UniProtKB-UniRule"/>
</dbReference>
<dbReference type="CDD" id="cd18079">
    <property type="entry name" value="S-AdoMet_synt"/>
    <property type="match status" value="1"/>
</dbReference>
<dbReference type="FunFam" id="3.30.300.10:FF:000003">
    <property type="entry name" value="S-adenosylmethionine synthase"/>
    <property type="match status" value="1"/>
</dbReference>
<dbReference type="FunFam" id="3.30.300.10:FF:000004">
    <property type="entry name" value="S-adenosylmethionine synthase"/>
    <property type="match status" value="1"/>
</dbReference>
<dbReference type="Gene3D" id="3.30.300.10">
    <property type="match status" value="3"/>
</dbReference>
<dbReference type="HAMAP" id="MF_00086">
    <property type="entry name" value="S_AdoMet_synth1"/>
    <property type="match status" value="1"/>
</dbReference>
<dbReference type="InterPro" id="IPR022631">
    <property type="entry name" value="ADOMET_SYNTHASE_CS"/>
</dbReference>
<dbReference type="InterPro" id="IPR022630">
    <property type="entry name" value="S-AdoMet_synt_C"/>
</dbReference>
<dbReference type="InterPro" id="IPR022629">
    <property type="entry name" value="S-AdoMet_synt_central"/>
</dbReference>
<dbReference type="InterPro" id="IPR022628">
    <property type="entry name" value="S-AdoMet_synt_N"/>
</dbReference>
<dbReference type="InterPro" id="IPR002133">
    <property type="entry name" value="S-AdoMet_synthetase"/>
</dbReference>
<dbReference type="InterPro" id="IPR022636">
    <property type="entry name" value="S-AdoMet_synthetase_sfam"/>
</dbReference>
<dbReference type="NCBIfam" id="TIGR01034">
    <property type="entry name" value="metK"/>
    <property type="match status" value="1"/>
</dbReference>
<dbReference type="PANTHER" id="PTHR11964">
    <property type="entry name" value="S-ADENOSYLMETHIONINE SYNTHETASE"/>
    <property type="match status" value="1"/>
</dbReference>
<dbReference type="Pfam" id="PF02773">
    <property type="entry name" value="S-AdoMet_synt_C"/>
    <property type="match status" value="1"/>
</dbReference>
<dbReference type="Pfam" id="PF02772">
    <property type="entry name" value="S-AdoMet_synt_M"/>
    <property type="match status" value="1"/>
</dbReference>
<dbReference type="Pfam" id="PF00438">
    <property type="entry name" value="S-AdoMet_synt_N"/>
    <property type="match status" value="1"/>
</dbReference>
<dbReference type="PIRSF" id="PIRSF000497">
    <property type="entry name" value="MAT"/>
    <property type="match status" value="1"/>
</dbReference>
<dbReference type="SUPFAM" id="SSF55973">
    <property type="entry name" value="S-adenosylmethionine synthetase"/>
    <property type="match status" value="3"/>
</dbReference>
<dbReference type="PROSITE" id="PS00376">
    <property type="entry name" value="ADOMET_SYNTHASE_1"/>
    <property type="match status" value="1"/>
</dbReference>
<dbReference type="PROSITE" id="PS00377">
    <property type="entry name" value="ADOMET_SYNTHASE_2"/>
    <property type="match status" value="1"/>
</dbReference>
<gene>
    <name evidence="1" type="primary">metK</name>
    <name type="ordered locus">Lcho_0126</name>
</gene>
<name>METK_LEPCP</name>
<feature type="chain" id="PRO_1000093059" description="S-adenosylmethionine synthase">
    <location>
        <begin position="1"/>
        <end position="393"/>
    </location>
</feature>
<feature type="region of interest" description="Flexible loop" evidence="1">
    <location>
        <begin position="100"/>
        <end position="110"/>
    </location>
</feature>
<feature type="binding site" description="in other chain" evidence="1">
    <location>
        <position position="16"/>
    </location>
    <ligand>
        <name>ATP</name>
        <dbReference type="ChEBI" id="CHEBI:30616"/>
        <note>ligand shared between two neighboring subunits</note>
    </ligand>
</feature>
<feature type="binding site" evidence="1">
    <location>
        <position position="18"/>
    </location>
    <ligand>
        <name>Mg(2+)</name>
        <dbReference type="ChEBI" id="CHEBI:18420"/>
    </ligand>
</feature>
<feature type="binding site" evidence="1">
    <location>
        <position position="44"/>
    </location>
    <ligand>
        <name>K(+)</name>
        <dbReference type="ChEBI" id="CHEBI:29103"/>
    </ligand>
</feature>
<feature type="binding site" description="in other chain" evidence="1">
    <location>
        <position position="57"/>
    </location>
    <ligand>
        <name>L-methionine</name>
        <dbReference type="ChEBI" id="CHEBI:57844"/>
        <note>ligand shared between two neighboring subunits</note>
    </ligand>
</feature>
<feature type="binding site" description="in other chain" evidence="1">
    <location>
        <position position="100"/>
    </location>
    <ligand>
        <name>L-methionine</name>
        <dbReference type="ChEBI" id="CHEBI:57844"/>
        <note>ligand shared between two neighboring subunits</note>
    </ligand>
</feature>
<feature type="binding site" description="in other chain" evidence="1">
    <location>
        <begin position="167"/>
        <end position="169"/>
    </location>
    <ligand>
        <name>ATP</name>
        <dbReference type="ChEBI" id="CHEBI:30616"/>
        <note>ligand shared between two neighboring subunits</note>
    </ligand>
</feature>
<feature type="binding site" description="in other chain" evidence="1">
    <location>
        <begin position="238"/>
        <end position="239"/>
    </location>
    <ligand>
        <name>ATP</name>
        <dbReference type="ChEBI" id="CHEBI:30616"/>
        <note>ligand shared between two neighboring subunits</note>
    </ligand>
</feature>
<feature type="binding site" evidence="1">
    <location>
        <position position="247"/>
    </location>
    <ligand>
        <name>ATP</name>
        <dbReference type="ChEBI" id="CHEBI:30616"/>
        <note>ligand shared between two neighboring subunits</note>
    </ligand>
</feature>
<feature type="binding site" evidence="1">
    <location>
        <position position="247"/>
    </location>
    <ligand>
        <name>L-methionine</name>
        <dbReference type="ChEBI" id="CHEBI:57844"/>
        <note>ligand shared between two neighboring subunits</note>
    </ligand>
</feature>
<feature type="binding site" description="in other chain" evidence="1">
    <location>
        <begin position="253"/>
        <end position="254"/>
    </location>
    <ligand>
        <name>ATP</name>
        <dbReference type="ChEBI" id="CHEBI:30616"/>
        <note>ligand shared between two neighboring subunits</note>
    </ligand>
</feature>
<feature type="binding site" evidence="1">
    <location>
        <position position="270"/>
    </location>
    <ligand>
        <name>ATP</name>
        <dbReference type="ChEBI" id="CHEBI:30616"/>
        <note>ligand shared between two neighboring subunits</note>
    </ligand>
</feature>
<feature type="binding site" evidence="1">
    <location>
        <position position="274"/>
    </location>
    <ligand>
        <name>ATP</name>
        <dbReference type="ChEBI" id="CHEBI:30616"/>
        <note>ligand shared between two neighboring subunits</note>
    </ligand>
</feature>
<feature type="binding site" description="in other chain" evidence="1">
    <location>
        <position position="278"/>
    </location>
    <ligand>
        <name>L-methionine</name>
        <dbReference type="ChEBI" id="CHEBI:57844"/>
        <note>ligand shared between two neighboring subunits</note>
    </ligand>
</feature>
<comment type="function">
    <text evidence="1">Catalyzes the formation of S-adenosylmethionine (AdoMet) from methionine and ATP. The overall synthetic reaction is composed of two sequential steps, AdoMet formation and the subsequent tripolyphosphate hydrolysis which occurs prior to release of AdoMet from the enzyme.</text>
</comment>
<comment type="catalytic activity">
    <reaction evidence="1">
        <text>L-methionine + ATP + H2O = S-adenosyl-L-methionine + phosphate + diphosphate</text>
        <dbReference type="Rhea" id="RHEA:21080"/>
        <dbReference type="ChEBI" id="CHEBI:15377"/>
        <dbReference type="ChEBI" id="CHEBI:30616"/>
        <dbReference type="ChEBI" id="CHEBI:33019"/>
        <dbReference type="ChEBI" id="CHEBI:43474"/>
        <dbReference type="ChEBI" id="CHEBI:57844"/>
        <dbReference type="ChEBI" id="CHEBI:59789"/>
        <dbReference type="EC" id="2.5.1.6"/>
    </reaction>
</comment>
<comment type="cofactor">
    <cofactor evidence="1">
        <name>Mg(2+)</name>
        <dbReference type="ChEBI" id="CHEBI:18420"/>
    </cofactor>
    <text evidence="1">Binds 2 divalent ions per subunit.</text>
</comment>
<comment type="cofactor">
    <cofactor evidence="1">
        <name>K(+)</name>
        <dbReference type="ChEBI" id="CHEBI:29103"/>
    </cofactor>
    <text evidence="1">Binds 1 potassium ion per subunit.</text>
</comment>
<comment type="pathway">
    <text evidence="1">Amino-acid biosynthesis; S-adenosyl-L-methionine biosynthesis; S-adenosyl-L-methionine from L-methionine: step 1/1.</text>
</comment>
<comment type="subunit">
    <text evidence="1">Homotetramer; dimer of dimers.</text>
</comment>
<comment type="subcellular location">
    <subcellularLocation>
        <location evidence="1">Cytoplasm</location>
    </subcellularLocation>
</comment>
<comment type="similarity">
    <text evidence="1">Belongs to the AdoMet synthase family.</text>
</comment>
<keyword id="KW-0067">ATP-binding</keyword>
<keyword id="KW-0963">Cytoplasm</keyword>
<keyword id="KW-0460">Magnesium</keyword>
<keyword id="KW-0479">Metal-binding</keyword>
<keyword id="KW-0547">Nucleotide-binding</keyword>
<keyword id="KW-0554">One-carbon metabolism</keyword>
<keyword id="KW-0630">Potassium</keyword>
<keyword id="KW-1185">Reference proteome</keyword>
<keyword id="KW-0808">Transferase</keyword>
<accession>B1Y6S3</accession>
<evidence type="ECO:0000255" key="1">
    <source>
        <dbReference type="HAMAP-Rule" id="MF_00086"/>
    </source>
</evidence>
<reference key="1">
    <citation type="submission" date="2008-03" db="EMBL/GenBank/DDBJ databases">
        <title>Complete sequence of Leptothrix cholodnii SP-6.</title>
        <authorList>
            <consortium name="US DOE Joint Genome Institute"/>
            <person name="Copeland A."/>
            <person name="Lucas S."/>
            <person name="Lapidus A."/>
            <person name="Glavina del Rio T."/>
            <person name="Dalin E."/>
            <person name="Tice H."/>
            <person name="Bruce D."/>
            <person name="Goodwin L."/>
            <person name="Pitluck S."/>
            <person name="Chertkov O."/>
            <person name="Brettin T."/>
            <person name="Detter J.C."/>
            <person name="Han C."/>
            <person name="Kuske C.R."/>
            <person name="Schmutz J."/>
            <person name="Larimer F."/>
            <person name="Land M."/>
            <person name="Hauser L."/>
            <person name="Kyrpides N."/>
            <person name="Lykidis A."/>
            <person name="Emerson D."/>
            <person name="Richardson P."/>
        </authorList>
    </citation>
    <scope>NUCLEOTIDE SEQUENCE [LARGE SCALE GENOMIC DNA]</scope>
    <source>
        <strain>ATCC 51168 / LMG 8142 / SP-6</strain>
    </source>
</reference>